<gene>
    <name type="primary">stambpa</name>
    <name type="synonym">amsh</name>
    <name type="synonym">stambp</name>
</gene>
<proteinExistence type="evidence at transcript level"/>
<evidence type="ECO:0000250" key="1">
    <source>
        <dbReference type="UniProtKB" id="O35864"/>
    </source>
</evidence>
<evidence type="ECO:0000250" key="2">
    <source>
        <dbReference type="UniProtKB" id="O95630"/>
    </source>
</evidence>
<evidence type="ECO:0000250" key="3">
    <source>
        <dbReference type="UniProtKB" id="Q96FJ0"/>
    </source>
</evidence>
<evidence type="ECO:0000255" key="4">
    <source>
        <dbReference type="PROSITE-ProRule" id="PRU01182"/>
    </source>
</evidence>
<evidence type="ECO:0000256" key="5">
    <source>
        <dbReference type="SAM" id="MobiDB-lite"/>
    </source>
</evidence>
<evidence type="ECO:0000305" key="6"/>
<accession>Q6TH47</accession>
<accession>B7ZV76</accession>
<accession>Q7SXP3</accession>
<sequence>MSEHTDCSVSSEDRVRALTKLGSSVDVSEDVPPRRYFRSGMEIIRMANIYADEGNVEHAFILYNKYITLFIEKLPKHREYKTANIPEKKETMRKLKEIAFPKAEELKKLLLKQYDKEHAEYLVRKRAEDAARAVEMLKQQEQEAQRQRLAELQQRQREQEQFSAFEEMIRRQELEKERRRIVQEFSIPVSPTAPDVLLPDVHGPPQASLSPQTPPAGATNHQGLPAFDRSLKPSVPVSAGHSALVNGLRQLFVPAELCQRFLKLAETNTARAVETCGILCGKLMKNAFTVTHVIVPKQCGGPDYCDTENEEELFLIQDQNDLITLGWIHTHPTQTAFLSSVDLHTHCSYQMMLPESIAIVCSPKFNETGYFRLTDYGMDDVGTCKQRGFHPHPKDPPLFAASHHVSITDGSVTMLDLR</sequence>
<feature type="chain" id="PRO_0000194872" description="STAM-binding protein-like A">
    <location>
        <begin position="1"/>
        <end position="418"/>
    </location>
</feature>
<feature type="domain" description="MPN" evidence="4">
    <location>
        <begin position="251"/>
        <end position="382"/>
    </location>
</feature>
<feature type="region of interest" description="Disordered" evidence="5">
    <location>
        <begin position="199"/>
        <end position="218"/>
    </location>
</feature>
<feature type="short sequence motif" description="JAMM motif" evidence="4">
    <location>
        <begin position="329"/>
        <end position="342"/>
    </location>
</feature>
<feature type="binding site" evidence="4">
    <location>
        <position position="329"/>
    </location>
    <ligand>
        <name>Zn(2+)</name>
        <dbReference type="ChEBI" id="CHEBI:29105"/>
        <label>1</label>
        <note>catalytic</note>
    </ligand>
</feature>
<feature type="binding site" evidence="4">
    <location>
        <position position="331"/>
    </location>
    <ligand>
        <name>Zn(2+)</name>
        <dbReference type="ChEBI" id="CHEBI:29105"/>
        <label>1</label>
        <note>catalytic</note>
    </ligand>
</feature>
<feature type="binding site" evidence="4">
    <location>
        <position position="342"/>
    </location>
    <ligand>
        <name>Zn(2+)</name>
        <dbReference type="ChEBI" id="CHEBI:29105"/>
        <label>1</label>
        <note>catalytic</note>
    </ligand>
</feature>
<feature type="binding site" evidence="3">
    <location>
        <position position="344"/>
    </location>
    <ligand>
        <name>Zn(2+)</name>
        <dbReference type="ChEBI" id="CHEBI:29105"/>
        <label>2</label>
    </ligand>
</feature>
<feature type="binding site" evidence="3">
    <location>
        <position position="384"/>
    </location>
    <ligand>
        <name>Zn(2+)</name>
        <dbReference type="ChEBI" id="CHEBI:29105"/>
        <label>2</label>
    </ligand>
</feature>
<feature type="binding site" evidence="3">
    <location>
        <position position="390"/>
    </location>
    <ligand>
        <name>Zn(2+)</name>
        <dbReference type="ChEBI" id="CHEBI:29105"/>
        <label>2</label>
    </ligand>
</feature>
<feature type="binding site" evidence="3">
    <location>
        <position position="392"/>
    </location>
    <ligand>
        <name>Zn(2+)</name>
        <dbReference type="ChEBI" id="CHEBI:29105"/>
        <label>2</label>
    </ligand>
</feature>
<feature type="site" description="Indirect zinc-binding" evidence="3">
    <location>
        <position position="274"/>
    </location>
</feature>
<feature type="sequence conflict" description="In Ref. 2; AAH55512." evidence="6" ref="2">
    <original>Q</original>
    <variation>H</variation>
    <location>
        <position position="153"/>
    </location>
</feature>
<feature type="sequence conflict" description="In Ref. 1; AAQ97742." evidence="6" ref="1">
    <original>Q</original>
    <variation>E</variation>
    <location>
        <position position="222"/>
    </location>
</feature>
<feature type="sequence conflict" description="In Ref. 1; AAQ97742." evidence="6" ref="1">
    <original>G</original>
    <variation>V</variation>
    <location>
        <position position="382"/>
    </location>
</feature>
<feature type="sequence conflict" description="In Ref. 1; AAQ97742." evidence="6" ref="1">
    <original>D</original>
    <variation>N</variation>
    <location>
        <position position="395"/>
    </location>
</feature>
<name>STBPA_DANRE</name>
<dbReference type="EC" id="3.4.19.-" evidence="2"/>
<dbReference type="EMBL" id="AY398309">
    <property type="protein sequence ID" value="AAQ97742.1"/>
    <property type="molecule type" value="mRNA"/>
</dbReference>
<dbReference type="EMBL" id="BC055512">
    <property type="protein sequence ID" value="AAH55512.1"/>
    <property type="molecule type" value="mRNA"/>
</dbReference>
<dbReference type="EMBL" id="BC171484">
    <property type="protein sequence ID" value="AAI71484.1"/>
    <property type="molecule type" value="mRNA"/>
</dbReference>
<dbReference type="RefSeq" id="NP_956792.1">
    <property type="nucleotide sequence ID" value="NM_200498.1"/>
</dbReference>
<dbReference type="SMR" id="Q6TH47"/>
<dbReference type="FunCoup" id="Q6TH47">
    <property type="interactions" value="1642"/>
</dbReference>
<dbReference type="STRING" id="7955.ENSDARP00000071164"/>
<dbReference type="MEROPS" id="M67.003"/>
<dbReference type="PaxDb" id="7955-ENSDARP00000071164"/>
<dbReference type="GeneID" id="797422"/>
<dbReference type="KEGG" id="dre:797422"/>
<dbReference type="AGR" id="ZFIN:ZDB-GENE-040426-1551"/>
<dbReference type="CTD" id="797422"/>
<dbReference type="ZFIN" id="ZDB-GENE-040426-1551">
    <property type="gene designation" value="stambpa"/>
</dbReference>
<dbReference type="eggNOG" id="KOG2880">
    <property type="taxonomic scope" value="Eukaryota"/>
</dbReference>
<dbReference type="InParanoid" id="Q6TH47"/>
<dbReference type="OrthoDB" id="3640at2759"/>
<dbReference type="PhylomeDB" id="Q6TH47"/>
<dbReference type="PRO" id="PR:Q6TH47"/>
<dbReference type="Proteomes" id="UP000000437">
    <property type="component" value="Alternate scaffold 10"/>
</dbReference>
<dbReference type="Proteomes" id="UP000000437">
    <property type="component" value="Chromosome 10"/>
</dbReference>
<dbReference type="GO" id="GO:0032154">
    <property type="term" value="C:cleavage furrow"/>
    <property type="evidence" value="ECO:0000318"/>
    <property type="project" value="GO_Central"/>
</dbReference>
<dbReference type="GO" id="GO:0005768">
    <property type="term" value="C:endosome"/>
    <property type="evidence" value="ECO:0000318"/>
    <property type="project" value="GO_Central"/>
</dbReference>
<dbReference type="GO" id="GO:0061578">
    <property type="term" value="F:K63-linked deubiquitinase activity"/>
    <property type="evidence" value="ECO:0000250"/>
    <property type="project" value="UniProtKB"/>
</dbReference>
<dbReference type="GO" id="GO:0046872">
    <property type="term" value="F:metal ion binding"/>
    <property type="evidence" value="ECO:0007669"/>
    <property type="project" value="UniProtKB-KW"/>
</dbReference>
<dbReference type="GO" id="GO:0140492">
    <property type="term" value="F:metal-dependent deubiquitinase activity"/>
    <property type="evidence" value="ECO:0007669"/>
    <property type="project" value="InterPro"/>
</dbReference>
<dbReference type="GO" id="GO:0046580">
    <property type="term" value="P:negative regulation of Ras protein signal transduction"/>
    <property type="evidence" value="ECO:0000318"/>
    <property type="project" value="GO_Central"/>
</dbReference>
<dbReference type="GO" id="GO:0070536">
    <property type="term" value="P:protein K63-linked deubiquitination"/>
    <property type="evidence" value="ECO:0007669"/>
    <property type="project" value="InterPro"/>
</dbReference>
<dbReference type="GO" id="GO:0006508">
    <property type="term" value="P:proteolysis"/>
    <property type="evidence" value="ECO:0007669"/>
    <property type="project" value="UniProtKB-KW"/>
</dbReference>
<dbReference type="CDD" id="cd08066">
    <property type="entry name" value="MPN_AMSH_like"/>
    <property type="match status" value="1"/>
</dbReference>
<dbReference type="FunFam" id="3.40.140.10:FF:000010">
    <property type="entry name" value="AMSH-like protease isoform X1"/>
    <property type="match status" value="1"/>
</dbReference>
<dbReference type="FunFam" id="1.20.58.80:FF:000013">
    <property type="entry name" value="STAM-binding protein-like A"/>
    <property type="match status" value="1"/>
</dbReference>
<dbReference type="Gene3D" id="3.40.140.10">
    <property type="entry name" value="Cytidine Deaminase, domain 2"/>
    <property type="match status" value="1"/>
</dbReference>
<dbReference type="Gene3D" id="1.20.58.80">
    <property type="entry name" value="Phosphotransferase system, lactose/cellobiose-type IIA subunit"/>
    <property type="match status" value="1"/>
</dbReference>
<dbReference type="InterPro" id="IPR000555">
    <property type="entry name" value="JAMM/MPN+_dom"/>
</dbReference>
<dbReference type="InterPro" id="IPR037518">
    <property type="entry name" value="MPN"/>
</dbReference>
<dbReference type="InterPro" id="IPR044098">
    <property type="entry name" value="STAMBP/STALP-like_MPN"/>
</dbReference>
<dbReference type="InterPro" id="IPR015063">
    <property type="entry name" value="USP8_dimer"/>
</dbReference>
<dbReference type="PANTHER" id="PTHR12947">
    <property type="entry name" value="AMSH-LIKE PROTEASE"/>
    <property type="match status" value="1"/>
</dbReference>
<dbReference type="PANTHER" id="PTHR12947:SF8">
    <property type="entry name" value="STAM-BINDING PROTEIN"/>
    <property type="match status" value="1"/>
</dbReference>
<dbReference type="Pfam" id="PF01398">
    <property type="entry name" value="JAB"/>
    <property type="match status" value="1"/>
</dbReference>
<dbReference type="Pfam" id="PF08969">
    <property type="entry name" value="USP8_dimer"/>
    <property type="match status" value="1"/>
</dbReference>
<dbReference type="SMART" id="SM00232">
    <property type="entry name" value="JAB_MPN"/>
    <property type="match status" value="1"/>
</dbReference>
<dbReference type="SUPFAM" id="SSF102712">
    <property type="entry name" value="JAB1/MPN domain"/>
    <property type="match status" value="1"/>
</dbReference>
<dbReference type="SUPFAM" id="SSF140856">
    <property type="entry name" value="USP8 N-terminal domain-like"/>
    <property type="match status" value="1"/>
</dbReference>
<dbReference type="PROSITE" id="PS50249">
    <property type="entry name" value="MPN"/>
    <property type="match status" value="1"/>
</dbReference>
<organism>
    <name type="scientific">Danio rerio</name>
    <name type="common">Zebrafish</name>
    <name type="synonym">Brachydanio rerio</name>
    <dbReference type="NCBI Taxonomy" id="7955"/>
    <lineage>
        <taxon>Eukaryota</taxon>
        <taxon>Metazoa</taxon>
        <taxon>Chordata</taxon>
        <taxon>Craniata</taxon>
        <taxon>Vertebrata</taxon>
        <taxon>Euteleostomi</taxon>
        <taxon>Actinopterygii</taxon>
        <taxon>Neopterygii</taxon>
        <taxon>Teleostei</taxon>
        <taxon>Ostariophysi</taxon>
        <taxon>Cypriniformes</taxon>
        <taxon>Danionidae</taxon>
        <taxon>Danioninae</taxon>
        <taxon>Danio</taxon>
    </lineage>
</organism>
<protein>
    <recommendedName>
        <fullName>STAM-binding protein-like A</fullName>
        <ecNumber evidence="2">3.4.19.-</ecNumber>
    </recommendedName>
</protein>
<keyword id="KW-0378">Hydrolase</keyword>
<keyword id="KW-0479">Metal-binding</keyword>
<keyword id="KW-0482">Metalloprotease</keyword>
<keyword id="KW-0645">Protease</keyword>
<keyword id="KW-1185">Reference proteome</keyword>
<keyword id="KW-0833">Ubl conjugation pathway</keyword>
<keyword id="KW-0862">Zinc</keyword>
<comment type="function">
    <text evidence="2">Zinc metalloprotease that specifically cleaves 'Lys-63'-linked polyubiquitin chains. Does not cleave 'Lys-48'-linked polyubiquitin chains (By similarity). Functions at the endosome and is able to oppose the ubiquitin-dependent sorting of receptors to lysosomes (By similarity).</text>
</comment>
<comment type="cofactor">
    <cofactor evidence="1">
        <name>Zn(2+)</name>
        <dbReference type="ChEBI" id="CHEBI:29105"/>
    </cofactor>
    <text evidence="1">Binds 2 Zn(2+) ions per subunit.</text>
</comment>
<comment type="domain">
    <text evidence="1">The JAMM motif is essential for the protease activity.</text>
</comment>
<comment type="similarity">
    <text evidence="6">Belongs to the peptidase M67C family.</text>
</comment>
<reference key="1">
    <citation type="journal article" date="2004" name="Proc. Natl. Acad. Sci. U.S.A.">
        <title>Hematopoietic gene expression profile in zebrafish kidney marrow.</title>
        <authorList>
            <person name="Song H.-D."/>
            <person name="Sun X.-J."/>
            <person name="Deng M."/>
            <person name="Zhang G.-W."/>
            <person name="Zhou Y."/>
            <person name="Wu X.-Y."/>
            <person name="Sheng Y."/>
            <person name="Chen Y."/>
            <person name="Ruan Z."/>
            <person name="Jiang C.-L."/>
            <person name="Fan H.-Y."/>
            <person name="Zon L.I."/>
            <person name="Kanki J.P."/>
            <person name="Liu T.X."/>
            <person name="Look A.T."/>
            <person name="Chen Z."/>
        </authorList>
    </citation>
    <scope>NUCLEOTIDE SEQUENCE [LARGE SCALE MRNA]</scope>
    <source>
        <tissue>Kidney marrow</tissue>
    </source>
</reference>
<reference key="2">
    <citation type="submission" date="2008-11" db="EMBL/GenBank/DDBJ databases">
        <authorList>
            <consortium name="NIH - Zebrafish Gene Collection (ZGC) project"/>
        </authorList>
    </citation>
    <scope>NUCLEOTIDE SEQUENCE [LARGE SCALE MRNA]</scope>
    <source>
        <strain>SJD</strain>
    </source>
</reference>